<protein>
    <recommendedName>
        <fullName>Aquaporin-4</fullName>
        <shortName>AQP-4</shortName>
    </recommendedName>
    <alternativeName>
        <fullName evidence="13">Mercurial-insensitive water channel</fullName>
        <shortName evidence="13">MIWC</shortName>
    </alternativeName>
    <alternativeName>
        <fullName>WCH4</fullName>
    </alternativeName>
</protein>
<feature type="chain" id="PRO_0000063950" description="Aquaporin-4">
    <location>
        <begin position="1"/>
        <end position="323"/>
    </location>
</feature>
<feature type="topological domain" description="Cytoplasmic" evidence="5 7">
    <location>
        <begin position="1"/>
        <end position="36"/>
    </location>
</feature>
<feature type="transmembrane region" description="Helical" evidence="5 7">
    <location>
        <begin position="37"/>
        <end position="57"/>
    </location>
</feature>
<feature type="topological domain" description="Extracellular" evidence="5 7">
    <location>
        <begin position="58"/>
        <end position="69"/>
    </location>
</feature>
<feature type="transmembrane region" description="Helical" evidence="5 7">
    <location>
        <begin position="70"/>
        <end position="89"/>
    </location>
</feature>
<feature type="topological domain" description="Cytoplasmic" evidence="5 7">
    <location>
        <begin position="90"/>
        <end position="93"/>
    </location>
</feature>
<feature type="intramembrane region" description="Discontinuously helical" evidence="5 7">
    <location>
        <begin position="94"/>
        <end position="101"/>
    </location>
</feature>
<feature type="topological domain" description="Cytoplasmic" evidence="5 7">
    <location>
        <begin position="102"/>
        <end position="115"/>
    </location>
</feature>
<feature type="transmembrane region" description="Helical" evidence="5 7">
    <location>
        <begin position="116"/>
        <end position="136"/>
    </location>
</feature>
<feature type="topological domain" description="Extracellular" evidence="5 7">
    <location>
        <begin position="137"/>
        <end position="155"/>
    </location>
</feature>
<feature type="transmembrane region" description="Helical" evidence="5 7">
    <location>
        <begin position="156"/>
        <end position="176"/>
    </location>
</feature>
<feature type="topological domain" description="Cytoplasmic" evidence="5 7">
    <location>
        <begin position="177"/>
        <end position="184"/>
    </location>
</feature>
<feature type="transmembrane region" description="Helical" evidence="5 7">
    <location>
        <begin position="185"/>
        <end position="205"/>
    </location>
</feature>
<feature type="topological domain" description="Extracellular" evidence="5 7">
    <location>
        <begin position="206"/>
        <end position="208"/>
    </location>
</feature>
<feature type="intramembrane region" description="Discontinuously helical" evidence="5 7">
    <location>
        <begin position="209"/>
        <end position="222"/>
    </location>
</feature>
<feature type="topological domain" description="Extracellular" evidence="5 7">
    <location>
        <begin position="223"/>
        <end position="231"/>
    </location>
</feature>
<feature type="transmembrane region" description="Helical" evidence="5 7">
    <location>
        <begin position="232"/>
        <end position="252"/>
    </location>
</feature>
<feature type="topological domain" description="Cytoplasmic" evidence="5 7">
    <location>
        <begin position="253"/>
        <end position="323"/>
    </location>
</feature>
<feature type="short sequence motif" description="NPA 1" evidence="15 16">
    <location>
        <begin position="97"/>
        <end position="99"/>
    </location>
</feature>
<feature type="short sequence motif" description="NPA 2" evidence="15 16">
    <location>
        <begin position="213"/>
        <end position="215"/>
    </location>
</feature>
<feature type="modified residue" description="Phosphoserine; by PKG" evidence="2">
    <location>
        <position position="111"/>
    </location>
</feature>
<feature type="modified residue" description="Phosphoserine; by PKC" evidence="8">
    <location>
        <position position="180"/>
    </location>
</feature>
<feature type="modified residue" description="Phosphoserine" evidence="21">
    <location>
        <position position="276"/>
    </location>
</feature>
<feature type="modified residue" description="Phosphoserine" evidence="4 21">
    <location>
        <position position="285"/>
    </location>
</feature>
<feature type="modified residue" description="Phosphothreonine" evidence="2">
    <location>
        <position position="289"/>
    </location>
</feature>
<feature type="modified residue" description="Phosphoserine" evidence="20">
    <location>
        <position position="321"/>
    </location>
</feature>
<feature type="lipid moiety-binding region" description="S-palmitoyl cysteine" evidence="6">
    <location>
        <position position="13"/>
    </location>
</feature>
<feature type="lipid moiety-binding region" description="S-palmitoyl cysteine" evidence="6">
    <location>
        <position position="17"/>
    </location>
</feature>
<feature type="glycosylation site" description="N-linked (GlcNAc...) asparagine" evidence="3">
    <location>
        <position position="153"/>
    </location>
</feature>
<feature type="splice variant" id="VSP_060149" description="In isoform 3." evidence="14">
    <location>
        <begin position="1"/>
        <end position="22"/>
    </location>
</feature>
<feature type="splice variant" id="VSP_003235" description="In isoform Short." evidence="14">
    <location>
        <begin position="150"/>
        <end position="204"/>
    </location>
</feature>
<feature type="mutagenesis site" description="Reduced palmitoylation. Loss of palmitoylation; when associated with A-17." evidence="6">
    <original>C</original>
    <variation>A</variation>
    <location>
        <position position="13"/>
    </location>
</feature>
<feature type="mutagenesis site" description="Reduced palmitoylation. Loss of palmitoylation; when associated with A-13." evidence="6">
    <original>C</original>
    <variation>A</variation>
    <location>
        <position position="17"/>
    </location>
</feature>
<feature type="mutagenesis site" description="Decreases internalization from the cell membrane in response to PKC activation." evidence="8">
    <original>S</original>
    <variation>A</variation>
    <location>
        <position position="180"/>
    </location>
</feature>
<feature type="mutagenesis site" description="Partial loss of transport activity." evidence="11">
    <original>H</original>
    <variation>P</variation>
    <location>
        <position position="201"/>
    </location>
</feature>
<feature type="sequence conflict" description="In Ref. 6; AAN40408." evidence="14" ref="6">
    <original>D</original>
    <variation>A</variation>
    <location>
        <position position="69"/>
    </location>
</feature>
<feature type="sequence conflict" description="In Ref. 3; AAA17730." evidence="14" ref="3">
    <original>H</original>
    <variation>P</variation>
    <location>
        <position position="201"/>
    </location>
</feature>
<feature type="helix" evidence="23">
    <location>
        <begin position="32"/>
        <end position="53"/>
    </location>
</feature>
<feature type="strand" evidence="22">
    <location>
        <begin position="60"/>
        <end position="63"/>
    </location>
</feature>
<feature type="helix" evidence="23">
    <location>
        <begin position="70"/>
        <end position="88"/>
    </location>
</feature>
<feature type="helix" evidence="23">
    <location>
        <begin position="89"/>
        <end position="91"/>
    </location>
</feature>
<feature type="helix" evidence="23">
    <location>
        <begin position="98"/>
        <end position="106"/>
    </location>
</feature>
<feature type="strand" evidence="23">
    <location>
        <begin position="108"/>
        <end position="110"/>
    </location>
</feature>
<feature type="turn" evidence="23">
    <location>
        <begin position="112"/>
        <end position="115"/>
    </location>
</feature>
<feature type="helix" evidence="23">
    <location>
        <begin position="116"/>
        <end position="134"/>
    </location>
</feature>
<feature type="turn" evidence="22">
    <location>
        <begin position="138"/>
        <end position="140"/>
    </location>
</feature>
<feature type="helix" evidence="23">
    <location>
        <begin position="141"/>
        <end position="143"/>
    </location>
</feature>
<feature type="helix" evidence="23">
    <location>
        <begin position="156"/>
        <end position="177"/>
    </location>
</feature>
<feature type="strand" evidence="23">
    <location>
        <begin position="180"/>
        <end position="183"/>
    </location>
</feature>
<feature type="helix" evidence="23">
    <location>
        <begin position="189"/>
        <end position="208"/>
    </location>
</feature>
<feature type="helix" evidence="23">
    <location>
        <begin position="214"/>
        <end position="224"/>
    </location>
</feature>
<feature type="turn" evidence="23">
    <location>
        <begin position="228"/>
        <end position="231"/>
    </location>
</feature>
<feature type="helix" evidence="23">
    <location>
        <begin position="232"/>
        <end position="249"/>
    </location>
</feature>
<feature type="turn" evidence="23">
    <location>
        <begin position="250"/>
        <end position="252"/>
    </location>
</feature>
<comment type="function">
    <text evidence="2 8 10 11">Forms a water-specific channel (PubMed:19800950, PubMed:7509789, PubMed:7528931). Plays an important role in brain water homeostasis and in glymphatic solute transport. Required for a normal rate of water exchange across the blood brain interface. Required for normal levels of cerebrospinal fluid influx into the brain cortex and parenchyma along paravascular spaces that surround penetrating arteries, and for normal drainage of interstitial fluid along paravenous drainage pathways. Thereby, it is required for normal clearance of solutes from the brain interstitial fluid, including soluble beta-amyloid peptides derived from APP. Plays a redundant role in urinary water homeostasis and urinary concentrating ability (By similarity).</text>
</comment>
<comment type="catalytic activity">
    <reaction evidence="1">
        <text>H2O(in) = H2O(out)</text>
        <dbReference type="Rhea" id="RHEA:29667"/>
        <dbReference type="ChEBI" id="CHEBI:15377"/>
    </reaction>
</comment>
<comment type="subunit">
    <text evidence="1 5 6 7 9">Homotetramer (PubMed:16325200, PubMed:19406128). The tetramers can form oligomeric arrays in membranes (PubMed:18179769, PubMed:29055082). The size of the oligomers differs between tissues and is smaller in skeletal muscle than in brain (PubMed:29055082). Interaction between AQP4 oligomeric arrays in close-by cells can contribute to cell-cell adhesion (PubMed:16325200). Part of a complex containing MLC1, TRPV4, HEPACAM and ATP1B1 (By similarity).</text>
</comment>
<comment type="interaction">
    <interactant intactId="EBI-15907593">
        <id>P47863</id>
    </interactant>
    <interactant intactId="EBI-10095418">
        <id>Q9ERZ8</id>
        <label>Trpv4</label>
    </interactant>
    <organismsDiffer>false</organismsDiffer>
    <experiments>4</experiments>
</comment>
<comment type="interaction">
    <interactant intactId="EBI-15907593">
        <id>P47863</id>
    </interactant>
    <interactant intactId="EBI-962786">
        <id>Q9HBA0</id>
        <label>TRPV4</label>
    </interactant>
    <organismsDiffer>true</organismsDiffer>
    <experiments>2</experiments>
</comment>
<comment type="interaction">
    <interactant intactId="EBI-15907676">
        <id>P47863-1</id>
    </interactant>
    <interactant intactId="EBI-10095418">
        <id>Q9ERZ8</id>
        <label>Trpv4</label>
    </interactant>
    <organismsDiffer>false</organismsDiffer>
    <experiments>2</experiments>
</comment>
<comment type="interaction">
    <interactant intactId="EBI-15907676">
        <id>P47863-1</id>
    </interactant>
    <interactant intactId="EBI-962786">
        <id>Q9HBA0</id>
        <label>TRPV4</label>
    </interactant>
    <organismsDiffer>true</organismsDiffer>
    <experiments>2</experiments>
</comment>
<comment type="subcellular location">
    <subcellularLocation>
        <location evidence="5 6 8 9 10 11">Cell membrane</location>
        <topology evidence="5 7">Multi-pass membrane protein</topology>
    </subcellularLocation>
    <subcellularLocation>
        <location evidence="2">Basolateral cell membrane</location>
        <topology evidence="5 7">Multi-pass membrane protein</topology>
    </subcellularLocation>
    <subcellularLocation>
        <location evidence="17">Endosome membrane</location>
    </subcellularLocation>
    <subcellularLocation>
        <location evidence="9">Cell membrane</location>
        <location evidence="9">Sarcolemma</location>
        <topology evidence="5 7">Multi-pass membrane protein</topology>
    </subcellularLocation>
    <subcellularLocation>
        <location evidence="9">Cell projection</location>
    </subcellularLocation>
    <text evidence="8 9">Activation of the vasopressin receptor AVPR1A triggers AQP4 phosphorylation at Ser-180 and promotes its internalization from the cell membrane (PubMed:19800950). Detected on brain astrocyte processes and astrocyte endfeet close to capillaries (PubMed:29055082).</text>
</comment>
<comment type="alternative products">
    <event type="alternative splicing"/>
    <isoform>
        <id>P47863-1</id>
        <name>Long</name>
        <name evidence="12">AQP4-M1</name>
        <sequence type="displayed"/>
    </isoform>
    <isoform>
        <id>P47863-2</id>
        <name>Short</name>
        <sequence type="described" ref="VSP_003235"/>
    </isoform>
    <isoform>
        <id>P47863-3</id>
        <name>3</name>
        <name evidence="12">AQP4-M23</name>
        <sequence type="described" ref="VSP_060149"/>
    </isoform>
</comment>
<comment type="tissue specificity">
    <text evidence="5 6 9 11">Detected in cerebellum (PubMed:18179769, PubMed:29055082). Detected on pericapillary astrocyte endfeet in cerebellum, and in skeletal muscle (PubMed:29055082). Detected in glial lamellae in the hypothalamus (at protein level) (PubMed:16325200). Abundant in mature brain cortex, cerebellum and spinal cord. Highly expressed in the ependymal cell lining the aqueductal system and over the space of the brain in contact with the subarachnoid space. Detected in paraventricular and supraoptic nuclei, the granule cell layer of the dentate gyrus and the Purkinje cell layer in the cerebellum. Only weakly detectable in eye, kidney, intestine, and lung (PubMed:7528931).</text>
</comment>
<comment type="developmental stage">
    <text evidence="11">Detected in mature brain, but not in fetal brain.</text>
</comment>
<comment type="domain">
    <text evidence="5 7">Aquaporins contain two tandem repeats each containing three membrane-spanning domains and a pore-forming loop with the signature motif Asn-Pro-Ala (NPA).</text>
</comment>
<comment type="PTM">
    <text evidence="2 8">Phosphorylation by PKC at Ser-180 promotes internalization from the cell membrane, reducing the conductance by 50% (PubMed:19800950). Phosphorylation by PKG at Ser-111 in response to glutamate increases conductance by 40% (By similarity).</text>
</comment>
<comment type="PTM">
    <text evidence="6">Isoform Long: Palmitoylated on its N-terminal region. Isoform 3: Not palmitoylated.</text>
</comment>
<comment type="similarity">
    <text evidence="14">Belongs to the MIP/aquaporin (TC 1.A.8) family.</text>
</comment>
<evidence type="ECO:0000250" key="1">
    <source>
        <dbReference type="UniProtKB" id="P55087"/>
    </source>
</evidence>
<evidence type="ECO:0000250" key="2">
    <source>
        <dbReference type="UniProtKB" id="P55088"/>
    </source>
</evidence>
<evidence type="ECO:0000255" key="3"/>
<evidence type="ECO:0000269" key="4">
    <source>
    </source>
</evidence>
<evidence type="ECO:0000269" key="5">
    <source>
    </source>
</evidence>
<evidence type="ECO:0000269" key="6">
    <source>
    </source>
</evidence>
<evidence type="ECO:0000269" key="7">
    <source>
    </source>
</evidence>
<evidence type="ECO:0000269" key="8">
    <source>
    </source>
</evidence>
<evidence type="ECO:0000269" key="9">
    <source>
    </source>
</evidence>
<evidence type="ECO:0000269" key="10">
    <source>
    </source>
</evidence>
<evidence type="ECO:0000269" key="11">
    <source>
    </source>
</evidence>
<evidence type="ECO:0000303" key="12">
    <source>
    </source>
</evidence>
<evidence type="ECO:0000303" key="13">
    <source>
    </source>
</evidence>
<evidence type="ECO:0000305" key="14"/>
<evidence type="ECO:0000305" key="15">
    <source>
    </source>
</evidence>
<evidence type="ECO:0000305" key="16">
    <source>
    </source>
</evidence>
<evidence type="ECO:0000305" key="17">
    <source>
    </source>
</evidence>
<evidence type="ECO:0000312" key="18">
    <source>
        <dbReference type="EMBL" id="AAN40408.1"/>
    </source>
</evidence>
<evidence type="ECO:0000312" key="19">
    <source>
        <dbReference type="EMBL" id="EDL75044.1"/>
    </source>
</evidence>
<evidence type="ECO:0007744" key="20">
    <source>
    </source>
</evidence>
<evidence type="ECO:0007744" key="21">
    <source>
    </source>
</evidence>
<evidence type="ECO:0007829" key="22">
    <source>
        <dbReference type="PDB" id="2D57"/>
    </source>
</evidence>
<evidence type="ECO:0007829" key="23">
    <source>
        <dbReference type="PDB" id="2ZZ9"/>
    </source>
</evidence>
<reference key="1">
    <citation type="journal article" date="1994" name="Proc. Natl. Acad. Sci. U.S.A.">
        <title>Molecular characterization of an aquaporin cDNA from brain: candidate osmoreceptor and regulator of water balance.</title>
        <authorList>
            <person name="Jung J.S."/>
            <person name="Bhat R.V."/>
            <person name="Preston G.M."/>
            <person name="Guggino W.B."/>
            <person name="Baraban J.M."/>
            <person name="Agre P."/>
        </authorList>
    </citation>
    <scope>NUCLEOTIDE SEQUENCE [MRNA] (ISOFORMS 3 AND LONG)</scope>
    <scope>FUNCTION</scope>
    <scope>SUBCELLULAR LOCATION</scope>
    <scope>TISSUE SPECIFICITY</scope>
    <scope>DEVELOPMENTAL STAGE</scope>
    <scope>MUTAGENESIS OF HIS-201</scope>
    <source>
        <tissue>Brain</tissue>
    </source>
</reference>
<reference key="2">
    <citation type="submission" date="1999-04" db="EMBL/GenBank/DDBJ databases">
        <title>Isolation of an aquaporin-4 water channel (AQP4) gene induced following cerebral ischemia from the rat brain using modified subtractive hybridization and differential screening.</title>
        <authorList>
            <person name="Chen D."/>
            <person name="Chen J."/>
            <person name="Jing K."/>
            <person name="Simon R.P."/>
            <person name="Graham S.H."/>
        </authorList>
    </citation>
    <scope>NUCLEOTIDE SEQUENCE [MRNA] (ISOFORM LONG)</scope>
    <source>
        <tissue>Brain</tissue>
    </source>
</reference>
<reference key="3">
    <citation type="journal article" date="1994" name="J. Biol. Chem.">
        <title>Molecular cloning of a mercurial-insensitive water channel expressed in selected water-transporting tissues.</title>
        <authorList>
            <person name="Hasegawa H."/>
            <person name="Ma T."/>
            <person name="Skach W."/>
            <person name="Matthay M.A."/>
            <person name="Verkman A.S."/>
        </authorList>
    </citation>
    <scope>NUCLEOTIDE SEQUENCE [MRNA] (ISOFORMS 3 AND SHORT)</scope>
    <scope>FUNCTION</scope>
    <scope>SUBCELLULAR LOCATION</scope>
    <scope>TISSUE SPECIFICITY</scope>
    <source>
        <tissue>Lung</tissue>
    </source>
</reference>
<reference key="4">
    <citation type="journal article" date="2004" name="Nature">
        <title>Genome sequence of the Brown Norway rat yields insights into mammalian evolution.</title>
        <authorList>
            <person name="Gibbs R.A."/>
            <person name="Weinstock G.M."/>
            <person name="Metzker M.L."/>
            <person name="Muzny D.M."/>
            <person name="Sodergren E.J."/>
            <person name="Scherer S."/>
            <person name="Scott G."/>
            <person name="Steffen D."/>
            <person name="Worley K.C."/>
            <person name="Burch P.E."/>
            <person name="Okwuonu G."/>
            <person name="Hines S."/>
            <person name="Lewis L."/>
            <person name="Deramo C."/>
            <person name="Delgado O."/>
            <person name="Dugan-Rocha S."/>
            <person name="Miner G."/>
            <person name="Morgan M."/>
            <person name="Hawes A."/>
            <person name="Gill R."/>
            <person name="Holt R.A."/>
            <person name="Adams M.D."/>
            <person name="Amanatides P.G."/>
            <person name="Baden-Tillson H."/>
            <person name="Barnstead M."/>
            <person name="Chin S."/>
            <person name="Evans C.A."/>
            <person name="Ferriera S."/>
            <person name="Fosler C."/>
            <person name="Glodek A."/>
            <person name="Gu Z."/>
            <person name="Jennings D."/>
            <person name="Kraft C.L."/>
            <person name="Nguyen T."/>
            <person name="Pfannkoch C.M."/>
            <person name="Sitter C."/>
            <person name="Sutton G.G."/>
            <person name="Venter J.C."/>
            <person name="Woodage T."/>
            <person name="Smith D."/>
            <person name="Lee H.-M."/>
            <person name="Gustafson E."/>
            <person name="Cahill P."/>
            <person name="Kana A."/>
            <person name="Doucette-Stamm L."/>
            <person name="Weinstock K."/>
            <person name="Fechtel K."/>
            <person name="Weiss R.B."/>
            <person name="Dunn D.M."/>
            <person name="Green E.D."/>
            <person name="Blakesley R.W."/>
            <person name="Bouffard G.G."/>
            <person name="De Jong P.J."/>
            <person name="Osoegawa K."/>
            <person name="Zhu B."/>
            <person name="Marra M."/>
            <person name="Schein J."/>
            <person name="Bosdet I."/>
            <person name="Fjell C."/>
            <person name="Jones S."/>
            <person name="Krzywinski M."/>
            <person name="Mathewson C."/>
            <person name="Siddiqui A."/>
            <person name="Wye N."/>
            <person name="McPherson J."/>
            <person name="Zhao S."/>
            <person name="Fraser C.M."/>
            <person name="Shetty J."/>
            <person name="Shatsman S."/>
            <person name="Geer K."/>
            <person name="Chen Y."/>
            <person name="Abramzon S."/>
            <person name="Nierman W.C."/>
            <person name="Havlak P.H."/>
            <person name="Chen R."/>
            <person name="Durbin K.J."/>
            <person name="Egan A."/>
            <person name="Ren Y."/>
            <person name="Song X.-Z."/>
            <person name="Li B."/>
            <person name="Liu Y."/>
            <person name="Qin X."/>
            <person name="Cawley S."/>
            <person name="Cooney A.J."/>
            <person name="D'Souza L.M."/>
            <person name="Martin K."/>
            <person name="Wu J.Q."/>
            <person name="Gonzalez-Garay M.L."/>
            <person name="Jackson A.R."/>
            <person name="Kalafus K.J."/>
            <person name="McLeod M.P."/>
            <person name="Milosavljevic A."/>
            <person name="Virk D."/>
            <person name="Volkov A."/>
            <person name="Wheeler D.A."/>
            <person name="Zhang Z."/>
            <person name="Bailey J.A."/>
            <person name="Eichler E.E."/>
            <person name="Tuzun E."/>
            <person name="Birney E."/>
            <person name="Mongin E."/>
            <person name="Ureta-Vidal A."/>
            <person name="Woodwark C."/>
            <person name="Zdobnov E."/>
            <person name="Bork P."/>
            <person name="Suyama M."/>
            <person name="Torrents D."/>
            <person name="Alexandersson M."/>
            <person name="Trask B.J."/>
            <person name="Young J.M."/>
            <person name="Huang H."/>
            <person name="Wang H."/>
            <person name="Xing H."/>
            <person name="Daniels S."/>
            <person name="Gietzen D."/>
            <person name="Schmidt J."/>
            <person name="Stevens K."/>
            <person name="Vitt U."/>
            <person name="Wingrove J."/>
            <person name="Camara F."/>
            <person name="Mar Alba M."/>
            <person name="Abril J.F."/>
            <person name="Guigo R."/>
            <person name="Smit A."/>
            <person name="Dubchak I."/>
            <person name="Rubin E.M."/>
            <person name="Couronne O."/>
            <person name="Poliakov A."/>
            <person name="Huebner N."/>
            <person name="Ganten D."/>
            <person name="Goesele C."/>
            <person name="Hummel O."/>
            <person name="Kreitler T."/>
            <person name="Lee Y.-A."/>
            <person name="Monti J."/>
            <person name="Schulz H."/>
            <person name="Zimdahl H."/>
            <person name="Himmelbauer H."/>
            <person name="Lehrach H."/>
            <person name="Jacob H.J."/>
            <person name="Bromberg S."/>
            <person name="Gullings-Handley J."/>
            <person name="Jensen-Seaman M.I."/>
            <person name="Kwitek A.E."/>
            <person name="Lazar J."/>
            <person name="Pasko D."/>
            <person name="Tonellato P.J."/>
            <person name="Twigger S."/>
            <person name="Ponting C.P."/>
            <person name="Duarte J.M."/>
            <person name="Rice S."/>
            <person name="Goodstadt L."/>
            <person name="Beatson S.A."/>
            <person name="Emes R.D."/>
            <person name="Winter E.E."/>
            <person name="Webber C."/>
            <person name="Brandt P."/>
            <person name="Nyakatura G."/>
            <person name="Adetobi M."/>
            <person name="Chiaromonte F."/>
            <person name="Elnitski L."/>
            <person name="Eswara P."/>
            <person name="Hardison R.C."/>
            <person name="Hou M."/>
            <person name="Kolbe D."/>
            <person name="Makova K."/>
            <person name="Miller W."/>
            <person name="Nekrutenko A."/>
            <person name="Riemer C."/>
            <person name="Schwartz S."/>
            <person name="Taylor J."/>
            <person name="Yang S."/>
            <person name="Zhang Y."/>
            <person name="Lindpaintner K."/>
            <person name="Andrews T.D."/>
            <person name="Caccamo M."/>
            <person name="Clamp M."/>
            <person name="Clarke L."/>
            <person name="Curwen V."/>
            <person name="Durbin R.M."/>
            <person name="Eyras E."/>
            <person name="Searle S.M."/>
            <person name="Cooper G.M."/>
            <person name="Batzoglou S."/>
            <person name="Brudno M."/>
            <person name="Sidow A."/>
            <person name="Stone E.A."/>
            <person name="Payseur B.A."/>
            <person name="Bourque G."/>
            <person name="Lopez-Otin C."/>
            <person name="Puente X.S."/>
            <person name="Chakrabarti K."/>
            <person name="Chatterji S."/>
            <person name="Dewey C."/>
            <person name="Pachter L."/>
            <person name="Bray N."/>
            <person name="Yap V.B."/>
            <person name="Caspi A."/>
            <person name="Tesler G."/>
            <person name="Pevzner P.A."/>
            <person name="Haussler D."/>
            <person name="Roskin K.M."/>
            <person name="Baertsch R."/>
            <person name="Clawson H."/>
            <person name="Furey T.S."/>
            <person name="Hinrichs A.S."/>
            <person name="Karolchik D."/>
            <person name="Kent W.J."/>
            <person name="Rosenbloom K.R."/>
            <person name="Trumbower H."/>
            <person name="Weirauch M."/>
            <person name="Cooper D.N."/>
            <person name="Stenson P.D."/>
            <person name="Ma B."/>
            <person name="Brent M."/>
            <person name="Arumugam M."/>
            <person name="Shteynberg D."/>
            <person name="Copley R.R."/>
            <person name="Taylor M.S."/>
            <person name="Riethman H."/>
            <person name="Mudunuri U."/>
            <person name="Peterson J."/>
            <person name="Guyer M."/>
            <person name="Felsenfeld A."/>
            <person name="Old S."/>
            <person name="Mockrin S."/>
            <person name="Collins F.S."/>
        </authorList>
    </citation>
    <scope>NUCLEOTIDE SEQUENCE [LARGE SCALE GENOMIC DNA]</scope>
    <source>
        <strain>Brown Norway</strain>
    </source>
</reference>
<reference evidence="19" key="5">
    <citation type="submission" date="2005-07" db="EMBL/GenBank/DDBJ databases">
        <authorList>
            <person name="Mural R.J."/>
            <person name="Adams M.D."/>
            <person name="Myers E.W."/>
            <person name="Smith H.O."/>
            <person name="Venter J.C."/>
        </authorList>
    </citation>
    <scope>NUCLEOTIDE SEQUENCE [LARGE SCALE GENOMIC DNA]</scope>
</reference>
<reference evidence="18" key="6">
    <citation type="journal article" date="2002" name="Biochem. Biophys. Res. Commun.">
        <title>Aquaporin 4 expression in the mammalian inner ear and its role in hearing.</title>
        <authorList>
            <person name="Mhatre A.N."/>
            <person name="Stern R.E."/>
            <person name="Li J."/>
            <person name="Lalwani A.K."/>
        </authorList>
    </citation>
    <scope>NUCLEOTIDE SEQUENCE [GENOMIC DNA] OF 1-69 (ISOFORM 3)</scope>
    <scope>TISSUE SPECIFICITY</scope>
</reference>
<reference key="7">
    <citation type="journal article" date="2003" name="Nat. Biotechnol.">
        <title>A method for the comprehensive proteomic analysis of membrane proteins.</title>
        <authorList>
            <person name="Wu C.C."/>
            <person name="MacCoss M.J."/>
            <person name="Howell K.E."/>
            <person name="Yates J.R. III"/>
        </authorList>
    </citation>
    <scope>PHOSPHORYLATION AT SER-285</scope>
</reference>
<reference key="8">
    <citation type="journal article" date="2006" name="Proc. Natl. Acad. Sci. U.S.A.">
        <title>Quantitative phosphoproteomics of vasopressin-sensitive renal cells: regulation of aquaporin-2 phosphorylation at two sites.</title>
        <authorList>
            <person name="Hoffert J.D."/>
            <person name="Pisitkun T."/>
            <person name="Wang G."/>
            <person name="Shen R.-F."/>
            <person name="Knepper M.A."/>
        </authorList>
    </citation>
    <scope>PHOSPHORYLATION [LARGE SCALE ANALYSIS] AT SER-321</scope>
    <scope>IDENTIFICATION BY MASS SPECTROMETRY [LARGE SCALE ANALYSIS]</scope>
</reference>
<reference key="9">
    <citation type="journal article" date="2008" name="Biochim. Biophys. Acta">
        <title>Formation of aquaporin-4 arrays is inhibited by palmitoylation of N-terminal cysteine residues.</title>
        <authorList>
            <person name="Suzuki H."/>
            <person name="Nishikawa K."/>
            <person name="Hiroaki Y."/>
            <person name="Fujiyoshi Y."/>
        </authorList>
    </citation>
    <scope>SUBCELLULAR LOCATION</scope>
    <scope>SUBUNIT</scope>
    <scope>ALTERNATIVE SPLICING</scope>
    <scope>PALMITOYLATION AT CYS-13 AND CYS-17 (ISOFORM LONG)</scope>
    <scope>MUTAGENESIS OF CYS-13 AND CYS-17</scope>
    <scope>TISSUE SPECIFICITY</scope>
</reference>
<reference key="10">
    <citation type="journal article" date="2009" name="Neuroscience">
        <title>Vasopressin-dependent short-term regulation of aquaporin 4 expressed in Xenopus oocytes.</title>
        <authorList>
            <person name="Moeller H.B."/>
            <person name="Fenton R.A."/>
            <person name="Zeuthen T."/>
            <person name="Macaulay N."/>
        </authorList>
    </citation>
    <scope>PHOSPHORYLATION AT SER-180</scope>
    <scope>FUNCTION</scope>
    <scope>SUBCELLULAR LOCATION</scope>
    <scope>MUTAGENESIS OF SER-180</scope>
</reference>
<reference key="11">
    <citation type="journal article" date="2012" name="Nat. Commun.">
        <title>Quantitative maps of protein phosphorylation sites across 14 different rat organs and tissues.</title>
        <authorList>
            <person name="Lundby A."/>
            <person name="Secher A."/>
            <person name="Lage K."/>
            <person name="Nordsborg N.B."/>
            <person name="Dmytriyev A."/>
            <person name="Lundby C."/>
            <person name="Olsen J.V."/>
        </authorList>
    </citation>
    <scope>PHOSPHORYLATION [LARGE SCALE ANALYSIS] AT SER-276 AND SER-285</scope>
    <scope>IDENTIFICATION BY MASS SPECTROMETRY [LARGE SCALE ANALYSIS]</scope>
</reference>
<reference key="12">
    <citation type="journal article" date="2018" name="J. Cell. Mol. Med.">
        <title>Supramolecular aggregation of aquaporin-4 is different in muscle and brain: correlation with tissue susceptibility in neuromyelitis optica.</title>
        <authorList>
            <person name="Rosito S."/>
            <person name="Nicchia G.P."/>
            <person name="Palazzo C."/>
            <person name="Lia A."/>
            <person name="Buccoliero C."/>
            <person name="Pisani F."/>
            <person name="Svelto M."/>
            <person name="Trojano M."/>
            <person name="Frigeri A."/>
        </authorList>
    </citation>
    <scope>TISSUE SPECIFICITY</scope>
    <scope>SUBCELLULAR LOCATION</scope>
    <scope>SUBUNIT</scope>
    <scope>ALTERNATIVE SPLICING</scope>
</reference>
<reference key="13">
    <citation type="journal article" date="2006" name="J. Mol. Biol.">
        <title>Implications of the aquaporin-4 structure on array formation and cell adhesion.</title>
        <authorList>
            <person name="Hiroaki Y."/>
            <person name="Tani K."/>
            <person name="Kamegawa A."/>
            <person name="Gyobu N."/>
            <person name="Nishikawa K."/>
            <person name="Suzuki H."/>
            <person name="Walz T."/>
            <person name="Sasaki S."/>
            <person name="Mitsuoka K."/>
            <person name="Kimura K."/>
            <person name="Mizoguchi A."/>
            <person name="Fujiyoshi Y."/>
        </authorList>
    </citation>
    <scope>X-RAY CRYSTALLOGRAPHY (3.2 ANGSTROMS) OF 23-323</scope>
    <scope>FUNCTION</scope>
    <scope>SUBCELLULAR LOCATION</scope>
    <scope>SUBUNIT</scope>
    <scope>TOPOLOGY</scope>
    <scope>DOMAIN</scope>
    <scope>TISSUE SPECIFICITY</scope>
</reference>
<reference key="14">
    <citation type="journal article" date="2009" name="J. Mol. Biol.">
        <title>Mechanism of aquaporin-4's fast and highly selective water conduction and proton exclusion.</title>
        <authorList>
            <person name="Tani K."/>
            <person name="Mitsuma T."/>
            <person name="Hiroaki Y."/>
            <person name="Kamegawa A."/>
            <person name="Nishikawa K."/>
            <person name="Tanimura Y."/>
            <person name="Fujiyoshi Y."/>
        </authorList>
    </citation>
    <scope>X-RAY CRYSTALLOGRAPHY (2.8 ANGSTROMS) OF 23-323</scope>
    <scope>SUBUNIT</scope>
    <scope>TOPOLOGY</scope>
    <scope>DOMAIN</scope>
</reference>
<proteinExistence type="evidence at protein level"/>
<organism>
    <name type="scientific">Rattus norvegicus</name>
    <name type="common">Rat</name>
    <dbReference type="NCBI Taxonomy" id="10116"/>
    <lineage>
        <taxon>Eukaryota</taxon>
        <taxon>Metazoa</taxon>
        <taxon>Chordata</taxon>
        <taxon>Craniata</taxon>
        <taxon>Vertebrata</taxon>
        <taxon>Euteleostomi</taxon>
        <taxon>Mammalia</taxon>
        <taxon>Eutheria</taxon>
        <taxon>Euarchontoglires</taxon>
        <taxon>Glires</taxon>
        <taxon>Rodentia</taxon>
        <taxon>Myomorpha</taxon>
        <taxon>Muroidea</taxon>
        <taxon>Muridae</taxon>
        <taxon>Murinae</taxon>
        <taxon>Rattus</taxon>
    </lineage>
</organism>
<keyword id="KW-0002">3D-structure</keyword>
<keyword id="KW-0025">Alternative splicing</keyword>
<keyword id="KW-1003">Cell membrane</keyword>
<keyword id="KW-0966">Cell projection</keyword>
<keyword id="KW-0967">Endosome</keyword>
<keyword id="KW-0325">Glycoprotein</keyword>
<keyword id="KW-0449">Lipoprotein</keyword>
<keyword id="KW-0472">Membrane</keyword>
<keyword id="KW-0564">Palmitate</keyword>
<keyword id="KW-0597">Phosphoprotein</keyword>
<keyword id="KW-1185">Reference proteome</keyword>
<keyword id="KW-0677">Repeat</keyword>
<keyword id="KW-0812">Transmembrane</keyword>
<keyword id="KW-1133">Transmembrane helix</keyword>
<keyword id="KW-0813">Transport</keyword>
<gene>
    <name type="primary">Aqp4</name>
</gene>
<sequence length="323" mass="34480">MSDGAAARRWGKCGPPCSRESIMVAFKGVWTQAFWKAVTAEFLAMLIFVLLSVGSTINWGGSENPLPVDMVLISLCFGLSIATMVQCFGHISGGHINPAVTVAMVCTRKISIAKSVFYITAQCLGAIIGAGILYLVTPPSVVGGLGVTTVHGNLTAGHGLLVELIITFQLVFTIFASCDSKRTDVTGSVALAIGFSVAIGHLFAINYTGASMNPARSFGPAVIMGNWENHWIYWVGPIIGAVLAGALYEYVFCPDVELKRRLKEAFSKAAQQTKGSYMEVEDNRSQVETEDLILKPGVVHVIDIDRGDEKKGKDSSGEVLSSV</sequence>
<dbReference type="EMBL" id="U14007">
    <property type="protein sequence ID" value="AAC52152.1"/>
    <property type="molecule type" value="mRNA"/>
</dbReference>
<dbReference type="EMBL" id="AF144082">
    <property type="protein sequence ID" value="AAD37965.1"/>
    <property type="molecule type" value="mRNA"/>
</dbReference>
<dbReference type="EMBL" id="L27588">
    <property type="protein sequence ID" value="AAA17730.1"/>
    <property type="molecule type" value="mRNA"/>
</dbReference>
<dbReference type="EMBL" id="AABR07031271">
    <property type="status" value="NOT_ANNOTATED_CDS"/>
    <property type="molecule type" value="Genomic_DNA"/>
</dbReference>
<dbReference type="EMBL" id="CH474065">
    <property type="protein sequence ID" value="EDL75044.1"/>
    <property type="molecule type" value="Genomic_DNA"/>
</dbReference>
<dbReference type="EMBL" id="AF541968">
    <property type="protein sequence ID" value="AAN40408.1"/>
    <property type="molecule type" value="Genomic_DNA"/>
</dbReference>
<dbReference type="PIR" id="I59283">
    <property type="entry name" value="I59283"/>
</dbReference>
<dbReference type="RefSeq" id="NP_001135838.1">
    <molecule id="P47863-3"/>
    <property type="nucleotide sequence ID" value="NM_001142366.2"/>
</dbReference>
<dbReference type="RefSeq" id="NP_001257487.1">
    <molecule id="P47863-2"/>
    <property type="nucleotide sequence ID" value="NM_001270558.2"/>
</dbReference>
<dbReference type="RefSeq" id="NP_036957.1">
    <molecule id="P47863-1"/>
    <property type="nucleotide sequence ID" value="NM_012825.4"/>
</dbReference>
<dbReference type="RefSeq" id="XP_017456346.1">
    <property type="nucleotide sequence ID" value="XM_017600857.1"/>
</dbReference>
<dbReference type="PDB" id="2D57">
    <property type="method" value="X-ray"/>
    <property type="resolution" value="3.20 A"/>
    <property type="chains" value="A=23-323"/>
</dbReference>
<dbReference type="PDB" id="2ZZ9">
    <property type="method" value="X-ray"/>
    <property type="resolution" value="2.80 A"/>
    <property type="chains" value="A=23-323"/>
</dbReference>
<dbReference type="PDB" id="3IYZ">
    <property type="method" value="EM"/>
    <property type="resolution" value="10.00 A"/>
    <property type="chains" value="A=23-323"/>
</dbReference>
<dbReference type="PDBsum" id="2D57"/>
<dbReference type="PDBsum" id="2ZZ9"/>
<dbReference type="PDBsum" id="3IYZ"/>
<dbReference type="EMDB" id="EMD-3214"/>
<dbReference type="EMDB" id="EMD-5202"/>
<dbReference type="SMR" id="P47863"/>
<dbReference type="BioGRID" id="247332">
    <property type="interactions" value="5"/>
</dbReference>
<dbReference type="CORUM" id="P47863"/>
<dbReference type="DIP" id="DIP-59601N"/>
<dbReference type="FunCoup" id="P47863">
    <property type="interactions" value="283"/>
</dbReference>
<dbReference type="IntAct" id="P47863">
    <property type="interactions" value="2"/>
</dbReference>
<dbReference type="STRING" id="10116.ENSRNOP00000072488"/>
<dbReference type="BindingDB" id="P47863"/>
<dbReference type="ChEMBL" id="CHEMBL5291512"/>
<dbReference type="GlyCosmos" id="P47863">
    <property type="glycosylation" value="1 site, No reported glycans"/>
</dbReference>
<dbReference type="GlyGen" id="P47863">
    <property type="glycosylation" value="3 sites"/>
</dbReference>
<dbReference type="iPTMnet" id="P47863"/>
<dbReference type="PhosphoSitePlus" id="P47863"/>
<dbReference type="SwissPalm" id="P47863"/>
<dbReference type="PaxDb" id="10116-ENSRNOP00000063720"/>
<dbReference type="GeneID" id="25293"/>
<dbReference type="KEGG" id="rno:25293"/>
<dbReference type="AGR" id="RGD:2143"/>
<dbReference type="CTD" id="361"/>
<dbReference type="RGD" id="2143">
    <property type="gene designation" value="Aqp4"/>
</dbReference>
<dbReference type="VEuPathDB" id="HostDB:ENSRNOG00000016043"/>
<dbReference type="eggNOG" id="KOG0223">
    <property type="taxonomic scope" value="Eukaryota"/>
</dbReference>
<dbReference type="InParanoid" id="P47863"/>
<dbReference type="PhylomeDB" id="P47863"/>
<dbReference type="Reactome" id="R-RNO-432040">
    <property type="pathway name" value="Vasopressin regulates renal water homeostasis via Aquaporins"/>
</dbReference>
<dbReference type="Reactome" id="R-RNO-432047">
    <property type="pathway name" value="Passive transport by Aquaporins"/>
</dbReference>
<dbReference type="EvolutionaryTrace" id="P47863"/>
<dbReference type="PRO" id="PR:P47863"/>
<dbReference type="Proteomes" id="UP000002494">
    <property type="component" value="Chromosome 18"/>
</dbReference>
<dbReference type="Proteomes" id="UP000234681">
    <property type="component" value="Chromosome 18"/>
</dbReference>
<dbReference type="Bgee" id="ENSRNOG00000016043">
    <property type="expression patterns" value="Expressed in cerebellum and 14 other cell types or tissues"/>
</dbReference>
<dbReference type="ExpressionAtlas" id="P47863">
    <property type="expression patterns" value="baseline and differential"/>
</dbReference>
<dbReference type="GO" id="GO:0097450">
    <property type="term" value="C:astrocyte end-foot"/>
    <property type="evidence" value="ECO:0000314"/>
    <property type="project" value="UniProtKB"/>
</dbReference>
<dbReference type="GO" id="GO:0009925">
    <property type="term" value="C:basal plasma membrane"/>
    <property type="evidence" value="ECO:0000314"/>
    <property type="project" value="RGD"/>
</dbReference>
<dbReference type="GO" id="GO:0016323">
    <property type="term" value="C:basolateral plasma membrane"/>
    <property type="evidence" value="ECO:0000314"/>
    <property type="project" value="RGD"/>
</dbReference>
<dbReference type="GO" id="GO:0031253">
    <property type="term" value="C:cell projection membrane"/>
    <property type="evidence" value="ECO:0000314"/>
    <property type="project" value="RGD"/>
</dbReference>
<dbReference type="GO" id="GO:0005911">
    <property type="term" value="C:cell-cell junction"/>
    <property type="evidence" value="ECO:0000266"/>
    <property type="project" value="RGD"/>
</dbReference>
<dbReference type="GO" id="GO:0005737">
    <property type="term" value="C:cytoplasm"/>
    <property type="evidence" value="ECO:0000266"/>
    <property type="project" value="RGD"/>
</dbReference>
<dbReference type="GO" id="GO:0010008">
    <property type="term" value="C:endosome membrane"/>
    <property type="evidence" value="ECO:0007669"/>
    <property type="project" value="UniProtKB-SubCell"/>
</dbReference>
<dbReference type="GO" id="GO:0009897">
    <property type="term" value="C:external side of plasma membrane"/>
    <property type="evidence" value="ECO:0000266"/>
    <property type="project" value="RGD"/>
</dbReference>
<dbReference type="GO" id="GO:0005576">
    <property type="term" value="C:extracellular region"/>
    <property type="evidence" value="ECO:0007669"/>
    <property type="project" value="GOC"/>
</dbReference>
<dbReference type="GO" id="GO:0005886">
    <property type="term" value="C:plasma membrane"/>
    <property type="evidence" value="ECO:0000314"/>
    <property type="project" value="UniProtKB"/>
</dbReference>
<dbReference type="GO" id="GO:0032991">
    <property type="term" value="C:protein-containing complex"/>
    <property type="evidence" value="ECO:0000314"/>
    <property type="project" value="RGD"/>
</dbReference>
<dbReference type="GO" id="GO:0042383">
    <property type="term" value="C:sarcolemma"/>
    <property type="evidence" value="ECO:0000314"/>
    <property type="project" value="UniProtKB"/>
</dbReference>
<dbReference type="GO" id="GO:0030315">
    <property type="term" value="C:T-tubule"/>
    <property type="evidence" value="ECO:0000314"/>
    <property type="project" value="RGD"/>
</dbReference>
<dbReference type="GO" id="GO:0042802">
    <property type="term" value="F:identical protein binding"/>
    <property type="evidence" value="ECO:0000353"/>
    <property type="project" value="RGD"/>
</dbReference>
<dbReference type="GO" id="GO:0015250">
    <property type="term" value="F:water channel activity"/>
    <property type="evidence" value="ECO:0000314"/>
    <property type="project" value="UniProtKB"/>
</dbReference>
<dbReference type="GO" id="GO:0015670">
    <property type="term" value="P:carbon dioxide transport"/>
    <property type="evidence" value="ECO:0000314"/>
    <property type="project" value="UniProtKB"/>
</dbReference>
<dbReference type="GO" id="GO:0098609">
    <property type="term" value="P:cell-cell adhesion"/>
    <property type="evidence" value="ECO:0000315"/>
    <property type="project" value="UniProtKB"/>
</dbReference>
<dbReference type="GO" id="GO:0071392">
    <property type="term" value="P:cellular response to estradiol stimulus"/>
    <property type="evidence" value="ECO:0000270"/>
    <property type="project" value="RGD"/>
</dbReference>
<dbReference type="GO" id="GO:0071333">
    <property type="term" value="P:cellular response to glucose stimulus"/>
    <property type="evidence" value="ECO:0000315"/>
    <property type="project" value="RGD"/>
</dbReference>
<dbReference type="GO" id="GO:0071347">
    <property type="term" value="P:cellular response to interleukin-1"/>
    <property type="evidence" value="ECO:0000270"/>
    <property type="project" value="RGD"/>
</dbReference>
<dbReference type="GO" id="GO:0071354">
    <property type="term" value="P:cellular response to interleukin-6"/>
    <property type="evidence" value="ECO:0000270"/>
    <property type="project" value="RGD"/>
</dbReference>
<dbReference type="GO" id="GO:0071346">
    <property type="term" value="P:cellular response to type II interferon"/>
    <property type="evidence" value="ECO:0000266"/>
    <property type="project" value="RGD"/>
</dbReference>
<dbReference type="GO" id="GO:0090660">
    <property type="term" value="P:cerebrospinal fluid circulation"/>
    <property type="evidence" value="ECO:0000250"/>
    <property type="project" value="UniProtKB"/>
</dbReference>
<dbReference type="GO" id="GO:0033326">
    <property type="term" value="P:cerebrospinal fluid secretion"/>
    <property type="evidence" value="ECO:0000266"/>
    <property type="project" value="RGD"/>
</dbReference>
<dbReference type="GO" id="GO:0051649">
    <property type="term" value="P:establishment of localization in cell"/>
    <property type="evidence" value="ECO:0000266"/>
    <property type="project" value="RGD"/>
</dbReference>
<dbReference type="GO" id="GO:0007565">
    <property type="term" value="P:female pregnancy"/>
    <property type="evidence" value="ECO:0000270"/>
    <property type="project" value="RGD"/>
</dbReference>
<dbReference type="GO" id="GO:0009992">
    <property type="term" value="P:intracellular water homeostasis"/>
    <property type="evidence" value="ECO:0000314"/>
    <property type="project" value="UniProtKB"/>
</dbReference>
<dbReference type="GO" id="GO:0050891">
    <property type="term" value="P:multicellular organismal-level water homeostasis"/>
    <property type="evidence" value="ECO:0000250"/>
    <property type="project" value="UniProtKB"/>
</dbReference>
<dbReference type="GO" id="GO:0060354">
    <property type="term" value="P:negative regulation of cell adhesion molecule production"/>
    <property type="evidence" value="ECO:0000315"/>
    <property type="project" value="RGD"/>
</dbReference>
<dbReference type="GO" id="GO:0032691">
    <property type="term" value="P:negative regulation of interleukin-1 beta production"/>
    <property type="evidence" value="ECO:0000315"/>
    <property type="project" value="RGD"/>
</dbReference>
<dbReference type="GO" id="GO:0032715">
    <property type="term" value="P:negative regulation of interleukin-6 production"/>
    <property type="evidence" value="ECO:0000315"/>
    <property type="project" value="RGD"/>
</dbReference>
<dbReference type="GO" id="GO:0051289">
    <property type="term" value="P:protein homotetramerization"/>
    <property type="evidence" value="ECO:0000314"/>
    <property type="project" value="UniProtKB"/>
</dbReference>
<dbReference type="GO" id="GO:0010574">
    <property type="term" value="P:regulation of vascular endothelial growth factor production"/>
    <property type="evidence" value="ECO:0000315"/>
    <property type="project" value="RGD"/>
</dbReference>
<dbReference type="GO" id="GO:0070295">
    <property type="term" value="P:renal water absorption"/>
    <property type="evidence" value="ECO:0000266"/>
    <property type="project" value="RGD"/>
</dbReference>
<dbReference type="GO" id="GO:0051384">
    <property type="term" value="P:response to glucocorticoid"/>
    <property type="evidence" value="ECO:0000270"/>
    <property type="project" value="RGD"/>
</dbReference>
<dbReference type="GO" id="GO:0007605">
    <property type="term" value="P:sensory perception of sound"/>
    <property type="evidence" value="ECO:0000266"/>
    <property type="project" value="RGD"/>
</dbReference>
<dbReference type="GO" id="GO:0006833">
    <property type="term" value="P:water transport"/>
    <property type="evidence" value="ECO:0000314"/>
    <property type="project" value="RGD"/>
</dbReference>
<dbReference type="CDD" id="cd00333">
    <property type="entry name" value="MIP"/>
    <property type="match status" value="1"/>
</dbReference>
<dbReference type="FunFam" id="1.20.1080.10:FF:000009">
    <property type="entry name" value="aquaporin-4 isoform X1"/>
    <property type="match status" value="1"/>
</dbReference>
<dbReference type="Gene3D" id="1.20.1080.10">
    <property type="entry name" value="Glycerol uptake facilitator protein"/>
    <property type="match status" value="1"/>
</dbReference>
<dbReference type="InterPro" id="IPR023271">
    <property type="entry name" value="Aquaporin-like"/>
</dbReference>
<dbReference type="InterPro" id="IPR034294">
    <property type="entry name" value="Aquaporin_transptr"/>
</dbReference>
<dbReference type="InterPro" id="IPR000425">
    <property type="entry name" value="MIP"/>
</dbReference>
<dbReference type="InterPro" id="IPR022357">
    <property type="entry name" value="MIP_CS"/>
</dbReference>
<dbReference type="NCBIfam" id="TIGR00861">
    <property type="entry name" value="MIP"/>
    <property type="match status" value="1"/>
</dbReference>
<dbReference type="PANTHER" id="PTHR19139">
    <property type="entry name" value="AQUAPORIN TRANSPORTER"/>
    <property type="match status" value="1"/>
</dbReference>
<dbReference type="PANTHER" id="PTHR19139:SF34">
    <property type="entry name" value="AQUAPORIN-4"/>
    <property type="match status" value="1"/>
</dbReference>
<dbReference type="Pfam" id="PF00230">
    <property type="entry name" value="MIP"/>
    <property type="match status" value="1"/>
</dbReference>
<dbReference type="PRINTS" id="PR02016">
    <property type="entry name" value="AQUAPORIN4"/>
</dbReference>
<dbReference type="PRINTS" id="PR00783">
    <property type="entry name" value="MINTRINSICP"/>
</dbReference>
<dbReference type="SUPFAM" id="SSF81338">
    <property type="entry name" value="Aquaporin-like"/>
    <property type="match status" value="1"/>
</dbReference>
<dbReference type="PROSITE" id="PS00221">
    <property type="entry name" value="MIP"/>
    <property type="match status" value="1"/>
</dbReference>
<accession>P47863</accession>
<accession>A0A0G2K4I1</accession>
<accession>Q8CIY8</accession>
<name>AQP4_RAT</name>